<dbReference type="EMBL" id="AE014296">
    <property type="protein sequence ID" value="AAF50017.2"/>
    <property type="molecule type" value="Genomic_DNA"/>
</dbReference>
<dbReference type="RefSeq" id="NP_524027.2">
    <property type="nucleotide sequence ID" value="NM_079303.2"/>
</dbReference>
<dbReference type="SMR" id="Q9VTN0"/>
<dbReference type="BioGRID" id="64685">
    <property type="interactions" value="1"/>
</dbReference>
<dbReference type="FunCoup" id="Q9VTN0">
    <property type="interactions" value="2"/>
</dbReference>
<dbReference type="IntAct" id="Q9VTN0">
    <property type="interactions" value="1"/>
</dbReference>
<dbReference type="STRING" id="7227.FBpp0075849"/>
<dbReference type="GlyCosmos" id="Q9VTN0">
    <property type="glycosylation" value="2 sites, No reported glycans"/>
</dbReference>
<dbReference type="GlyGen" id="Q9VTN0">
    <property type="glycosylation" value="2 sites"/>
</dbReference>
<dbReference type="PaxDb" id="7227-FBpp0075849"/>
<dbReference type="DNASU" id="39324"/>
<dbReference type="EnsemblMetazoa" id="FBtr0076118">
    <property type="protein sequence ID" value="FBpp0075849"/>
    <property type="gene ID" value="FBgn0041231"/>
</dbReference>
<dbReference type="GeneID" id="39324"/>
<dbReference type="KEGG" id="dme:Dmel_CG7303"/>
<dbReference type="AGR" id="FB:FBgn0041231"/>
<dbReference type="CTD" id="39324"/>
<dbReference type="FlyBase" id="FBgn0041231">
    <property type="gene designation" value="Gr68a"/>
</dbReference>
<dbReference type="VEuPathDB" id="VectorBase:FBgn0041231"/>
<dbReference type="eggNOG" id="ENOG502T08N">
    <property type="taxonomic scope" value="Eukaryota"/>
</dbReference>
<dbReference type="GeneTree" id="ENSGT00940000166130"/>
<dbReference type="HOGENOM" id="CLU_058693_0_0_1"/>
<dbReference type="InParanoid" id="Q9VTN0"/>
<dbReference type="OMA" id="SYTMMVL"/>
<dbReference type="OrthoDB" id="6366728at2759"/>
<dbReference type="PhylomeDB" id="Q9VTN0"/>
<dbReference type="BioGRID-ORCS" id="39324">
    <property type="hits" value="0 hits in 1 CRISPR screen"/>
</dbReference>
<dbReference type="GenomeRNAi" id="39324"/>
<dbReference type="PRO" id="PR:Q9VTN0"/>
<dbReference type="Proteomes" id="UP000000803">
    <property type="component" value="Chromosome 3L"/>
</dbReference>
<dbReference type="ExpressionAtlas" id="Q9VTN0">
    <property type="expression patterns" value="baseline"/>
</dbReference>
<dbReference type="GO" id="GO:0030424">
    <property type="term" value="C:axon"/>
    <property type="evidence" value="ECO:0000318"/>
    <property type="project" value="GO_Central"/>
</dbReference>
<dbReference type="GO" id="GO:0030425">
    <property type="term" value="C:dendrite"/>
    <property type="evidence" value="ECO:0000318"/>
    <property type="project" value="GO_Central"/>
</dbReference>
<dbReference type="GO" id="GO:0016020">
    <property type="term" value="C:membrane"/>
    <property type="evidence" value="ECO:0000303"/>
    <property type="project" value="UniProtKB"/>
</dbReference>
<dbReference type="GO" id="GO:0043025">
    <property type="term" value="C:neuronal cell body"/>
    <property type="evidence" value="ECO:0000318"/>
    <property type="project" value="GO_Central"/>
</dbReference>
<dbReference type="GO" id="GO:0005886">
    <property type="term" value="C:plasma membrane"/>
    <property type="evidence" value="ECO:0000250"/>
    <property type="project" value="FlyBase"/>
</dbReference>
<dbReference type="GO" id="GO:0015276">
    <property type="term" value="F:ligand-gated monoatomic ion channel activity"/>
    <property type="evidence" value="ECO:0000250"/>
    <property type="project" value="FlyBase"/>
</dbReference>
<dbReference type="GO" id="GO:0008527">
    <property type="term" value="F:taste receptor activity"/>
    <property type="evidence" value="ECO:0000250"/>
    <property type="project" value="FlyBase"/>
</dbReference>
<dbReference type="GO" id="GO:0007635">
    <property type="term" value="P:chemosensory behavior"/>
    <property type="evidence" value="ECO:0000318"/>
    <property type="project" value="GO_Central"/>
</dbReference>
<dbReference type="GO" id="GO:0050912">
    <property type="term" value="P:detection of chemical stimulus involved in sensory perception of taste"/>
    <property type="evidence" value="ECO:0000303"/>
    <property type="project" value="UniProtKB"/>
</dbReference>
<dbReference type="GO" id="GO:0008049">
    <property type="term" value="P:male courtship behavior"/>
    <property type="evidence" value="ECO:0000318"/>
    <property type="project" value="GO_Central"/>
</dbReference>
<dbReference type="GO" id="GO:0016544">
    <property type="term" value="P:male courtship behavior, tapping to detect pheromone"/>
    <property type="evidence" value="ECO:0000315"/>
    <property type="project" value="UniProtKB"/>
</dbReference>
<dbReference type="GO" id="GO:0034220">
    <property type="term" value="P:monoatomic ion transmembrane transport"/>
    <property type="evidence" value="ECO:0000250"/>
    <property type="project" value="FlyBase"/>
</dbReference>
<dbReference type="GO" id="GO:0019236">
    <property type="term" value="P:response to pheromone"/>
    <property type="evidence" value="ECO:0000315"/>
    <property type="project" value="FlyBase"/>
</dbReference>
<dbReference type="GO" id="GO:0050909">
    <property type="term" value="P:sensory perception of taste"/>
    <property type="evidence" value="ECO:0000250"/>
    <property type="project" value="FlyBase"/>
</dbReference>
<dbReference type="GO" id="GO:0007165">
    <property type="term" value="P:signal transduction"/>
    <property type="evidence" value="ECO:0007669"/>
    <property type="project" value="UniProtKB-KW"/>
</dbReference>
<dbReference type="InterPro" id="IPR013604">
    <property type="entry name" value="7TM_chemorcpt"/>
</dbReference>
<dbReference type="PANTHER" id="PTHR21143:SF133">
    <property type="entry name" value="GUSTATORY AND PHEROMONE RECEPTOR 32A-RELATED"/>
    <property type="match status" value="1"/>
</dbReference>
<dbReference type="PANTHER" id="PTHR21143">
    <property type="entry name" value="INVERTEBRATE GUSTATORY RECEPTOR"/>
    <property type="match status" value="1"/>
</dbReference>
<dbReference type="Pfam" id="PF08395">
    <property type="entry name" value="7tm_7"/>
    <property type="match status" value="1"/>
</dbReference>
<name>GR68A_DROME</name>
<reference key="1">
    <citation type="journal article" date="2000" name="Science">
        <title>The genome sequence of Drosophila melanogaster.</title>
        <authorList>
            <person name="Adams M.D."/>
            <person name="Celniker S.E."/>
            <person name="Holt R.A."/>
            <person name="Evans C.A."/>
            <person name="Gocayne J.D."/>
            <person name="Amanatides P.G."/>
            <person name="Scherer S.E."/>
            <person name="Li P.W."/>
            <person name="Hoskins R.A."/>
            <person name="Galle R.F."/>
            <person name="George R.A."/>
            <person name="Lewis S.E."/>
            <person name="Richards S."/>
            <person name="Ashburner M."/>
            <person name="Henderson S.N."/>
            <person name="Sutton G.G."/>
            <person name="Wortman J.R."/>
            <person name="Yandell M.D."/>
            <person name="Zhang Q."/>
            <person name="Chen L.X."/>
            <person name="Brandon R.C."/>
            <person name="Rogers Y.-H.C."/>
            <person name="Blazej R.G."/>
            <person name="Champe M."/>
            <person name="Pfeiffer B.D."/>
            <person name="Wan K.H."/>
            <person name="Doyle C."/>
            <person name="Baxter E.G."/>
            <person name="Helt G."/>
            <person name="Nelson C.R."/>
            <person name="Miklos G.L.G."/>
            <person name="Abril J.F."/>
            <person name="Agbayani A."/>
            <person name="An H.-J."/>
            <person name="Andrews-Pfannkoch C."/>
            <person name="Baldwin D."/>
            <person name="Ballew R.M."/>
            <person name="Basu A."/>
            <person name="Baxendale J."/>
            <person name="Bayraktaroglu L."/>
            <person name="Beasley E.M."/>
            <person name="Beeson K.Y."/>
            <person name="Benos P.V."/>
            <person name="Berman B.P."/>
            <person name="Bhandari D."/>
            <person name="Bolshakov S."/>
            <person name="Borkova D."/>
            <person name="Botchan M.R."/>
            <person name="Bouck J."/>
            <person name="Brokstein P."/>
            <person name="Brottier P."/>
            <person name="Burtis K.C."/>
            <person name="Busam D.A."/>
            <person name="Butler H."/>
            <person name="Cadieu E."/>
            <person name="Center A."/>
            <person name="Chandra I."/>
            <person name="Cherry J.M."/>
            <person name="Cawley S."/>
            <person name="Dahlke C."/>
            <person name="Davenport L.B."/>
            <person name="Davies P."/>
            <person name="de Pablos B."/>
            <person name="Delcher A."/>
            <person name="Deng Z."/>
            <person name="Mays A.D."/>
            <person name="Dew I."/>
            <person name="Dietz S.M."/>
            <person name="Dodson K."/>
            <person name="Doup L.E."/>
            <person name="Downes M."/>
            <person name="Dugan-Rocha S."/>
            <person name="Dunkov B.C."/>
            <person name="Dunn P."/>
            <person name="Durbin K.J."/>
            <person name="Evangelista C.C."/>
            <person name="Ferraz C."/>
            <person name="Ferriera S."/>
            <person name="Fleischmann W."/>
            <person name="Fosler C."/>
            <person name="Gabrielian A.E."/>
            <person name="Garg N.S."/>
            <person name="Gelbart W.M."/>
            <person name="Glasser K."/>
            <person name="Glodek A."/>
            <person name="Gong F."/>
            <person name="Gorrell J.H."/>
            <person name="Gu Z."/>
            <person name="Guan P."/>
            <person name="Harris M."/>
            <person name="Harris N.L."/>
            <person name="Harvey D.A."/>
            <person name="Heiman T.J."/>
            <person name="Hernandez J.R."/>
            <person name="Houck J."/>
            <person name="Hostin D."/>
            <person name="Houston K.A."/>
            <person name="Howland T.J."/>
            <person name="Wei M.-H."/>
            <person name="Ibegwam C."/>
            <person name="Jalali M."/>
            <person name="Kalush F."/>
            <person name="Karpen G.H."/>
            <person name="Ke Z."/>
            <person name="Kennison J.A."/>
            <person name="Ketchum K.A."/>
            <person name="Kimmel B.E."/>
            <person name="Kodira C.D."/>
            <person name="Kraft C.L."/>
            <person name="Kravitz S."/>
            <person name="Kulp D."/>
            <person name="Lai Z."/>
            <person name="Lasko P."/>
            <person name="Lei Y."/>
            <person name="Levitsky A.A."/>
            <person name="Li J.H."/>
            <person name="Li Z."/>
            <person name="Liang Y."/>
            <person name="Lin X."/>
            <person name="Liu X."/>
            <person name="Mattei B."/>
            <person name="McIntosh T.C."/>
            <person name="McLeod M.P."/>
            <person name="McPherson D."/>
            <person name="Merkulov G."/>
            <person name="Milshina N.V."/>
            <person name="Mobarry C."/>
            <person name="Morris J."/>
            <person name="Moshrefi A."/>
            <person name="Mount S.M."/>
            <person name="Moy M."/>
            <person name="Murphy B."/>
            <person name="Murphy L."/>
            <person name="Muzny D.M."/>
            <person name="Nelson D.L."/>
            <person name="Nelson D.R."/>
            <person name="Nelson K.A."/>
            <person name="Nixon K."/>
            <person name="Nusskern D.R."/>
            <person name="Pacleb J.M."/>
            <person name="Palazzolo M."/>
            <person name="Pittman G.S."/>
            <person name="Pan S."/>
            <person name="Pollard J."/>
            <person name="Puri V."/>
            <person name="Reese M.G."/>
            <person name="Reinert K."/>
            <person name="Remington K."/>
            <person name="Saunders R.D.C."/>
            <person name="Scheeler F."/>
            <person name="Shen H."/>
            <person name="Shue B.C."/>
            <person name="Siden-Kiamos I."/>
            <person name="Simpson M."/>
            <person name="Skupski M.P."/>
            <person name="Smith T.J."/>
            <person name="Spier E."/>
            <person name="Spradling A.C."/>
            <person name="Stapleton M."/>
            <person name="Strong R."/>
            <person name="Sun E."/>
            <person name="Svirskas R."/>
            <person name="Tector C."/>
            <person name="Turner R."/>
            <person name="Venter E."/>
            <person name="Wang A.H."/>
            <person name="Wang X."/>
            <person name="Wang Z.-Y."/>
            <person name="Wassarman D.A."/>
            <person name="Weinstock G.M."/>
            <person name="Weissenbach J."/>
            <person name="Williams S.M."/>
            <person name="Woodage T."/>
            <person name="Worley K.C."/>
            <person name="Wu D."/>
            <person name="Yang S."/>
            <person name="Yao Q.A."/>
            <person name="Ye J."/>
            <person name="Yeh R.-F."/>
            <person name="Zaveri J.S."/>
            <person name="Zhan M."/>
            <person name="Zhang G."/>
            <person name="Zhao Q."/>
            <person name="Zheng L."/>
            <person name="Zheng X.H."/>
            <person name="Zhong F.N."/>
            <person name="Zhong W."/>
            <person name="Zhou X."/>
            <person name="Zhu S.C."/>
            <person name="Zhu X."/>
            <person name="Smith H.O."/>
            <person name="Gibbs R.A."/>
            <person name="Myers E.W."/>
            <person name="Rubin G.M."/>
            <person name="Venter J.C."/>
        </authorList>
    </citation>
    <scope>NUCLEOTIDE SEQUENCE [LARGE SCALE GENOMIC DNA]</scope>
    <source>
        <strain>Berkeley</strain>
    </source>
</reference>
<reference key="2">
    <citation type="journal article" date="2002" name="Genome Biol.">
        <title>Annotation of the Drosophila melanogaster euchromatic genome: a systematic review.</title>
        <authorList>
            <person name="Misra S."/>
            <person name="Crosby M.A."/>
            <person name="Mungall C.J."/>
            <person name="Matthews B.B."/>
            <person name="Campbell K.S."/>
            <person name="Hradecky P."/>
            <person name="Huang Y."/>
            <person name="Kaminker J.S."/>
            <person name="Millburn G.H."/>
            <person name="Prochnik S.E."/>
            <person name="Smith C.D."/>
            <person name="Tupy J.L."/>
            <person name="Whitfield E.J."/>
            <person name="Bayraktaroglu L."/>
            <person name="Berman B.P."/>
            <person name="Bettencourt B.R."/>
            <person name="Celniker S.E."/>
            <person name="de Grey A.D.N.J."/>
            <person name="Drysdale R.A."/>
            <person name="Harris N.L."/>
            <person name="Richter J."/>
            <person name="Russo S."/>
            <person name="Schroeder A.J."/>
            <person name="Shu S.Q."/>
            <person name="Stapleton M."/>
            <person name="Yamada C."/>
            <person name="Ashburner M."/>
            <person name="Gelbart W.M."/>
            <person name="Rubin G.M."/>
            <person name="Lewis S.E."/>
        </authorList>
    </citation>
    <scope>GENOME REANNOTATION</scope>
    <source>
        <strain>Berkeley</strain>
    </source>
</reference>
<reference key="3">
    <citation type="journal article" date="2001" name="Curr. Biol.">
        <title>Spatially restricted expression of candidate taste receptors in the Drosophila gustatory system.</title>
        <authorList>
            <person name="Dunipace L."/>
            <person name="Meister S."/>
            <person name="McNealy C."/>
            <person name="Amrein H."/>
        </authorList>
    </citation>
    <scope>IDENTIFICATION</scope>
</reference>
<reference key="4">
    <citation type="journal article" date="2003" name="Neuron">
        <title>A putative Drosophila pheromone receptor expressed in male-specific taste neurons is required for efficient courtship.</title>
        <authorList>
            <person name="Bray S."/>
            <person name="Amrein H."/>
        </authorList>
    </citation>
    <scope>FUNCTION</scope>
    <scope>TISSUE SPECIFICITY</scope>
</reference>
<reference key="5">
    <citation type="journal article" date="2011" name="J. Neurosci.">
        <title>Molecular and cellular organization of the taste system in the Drosophila larva.</title>
        <authorList>
            <person name="Kwon J.Y."/>
            <person name="Dahanukar A."/>
            <person name="Weiss L.A."/>
            <person name="Carlson J.R."/>
        </authorList>
    </citation>
    <scope>TISSUE SPECIFICITY</scope>
</reference>
<reference key="6">
    <citation type="journal article" date="2015" name="Elife">
        <title>The neuropeptide tachykinin is essential for pheromone detection in a gustatory neural circuit.</title>
        <authorList>
            <person name="Shankar S."/>
            <person name="Chua J.Y."/>
            <person name="Tan K.J."/>
            <person name="Calvert M.E."/>
            <person name="Weng R."/>
            <person name="Ng W.C."/>
            <person name="Mori K."/>
            <person name="Yew J.Y."/>
        </authorList>
    </citation>
    <scope>FUNCTION</scope>
    <scope>DISRUPTION PHENOTYPE</scope>
</reference>
<feature type="chain" id="PRO_0000216536" description="Gustatory receptor 68a">
    <location>
        <begin position="1"/>
        <end position="389"/>
    </location>
</feature>
<feature type="topological domain" description="Cytoplasmic" evidence="1">
    <location>
        <begin position="1"/>
        <end position="42"/>
    </location>
</feature>
<feature type="transmembrane region" description="Helical; Name=1" evidence="2">
    <location>
        <begin position="43"/>
        <end position="63"/>
    </location>
</feature>
<feature type="topological domain" description="Extracellular" evidence="1">
    <location>
        <begin position="64"/>
        <end position="82"/>
    </location>
</feature>
<feature type="transmembrane region" description="Helical; Name=2" evidence="2">
    <location>
        <begin position="83"/>
        <end position="103"/>
    </location>
</feature>
<feature type="topological domain" description="Cytoplasmic" evidence="1">
    <location>
        <begin position="104"/>
        <end position="133"/>
    </location>
</feature>
<feature type="transmembrane region" description="Helical; Name=3" evidence="2">
    <location>
        <begin position="134"/>
        <end position="154"/>
    </location>
</feature>
<feature type="topological domain" description="Extracellular" evidence="1">
    <location>
        <begin position="155"/>
        <end position="164"/>
    </location>
</feature>
<feature type="transmembrane region" description="Helical; Name=4" evidence="2">
    <location>
        <begin position="165"/>
        <end position="185"/>
    </location>
</feature>
<feature type="topological domain" description="Cytoplasmic" evidence="1">
    <location>
        <begin position="186"/>
        <end position="236"/>
    </location>
</feature>
<feature type="transmembrane region" description="Helical; Name=5" evidence="2">
    <location>
        <begin position="237"/>
        <end position="257"/>
    </location>
</feature>
<feature type="topological domain" description="Extracellular" evidence="1">
    <location>
        <begin position="258"/>
        <end position="281"/>
    </location>
</feature>
<feature type="transmembrane region" description="Helical; Name=6" evidence="2">
    <location>
        <begin position="282"/>
        <end position="302"/>
    </location>
</feature>
<feature type="topological domain" description="Cytoplasmic" evidence="1">
    <location>
        <begin position="303"/>
        <end position="352"/>
    </location>
</feature>
<feature type="transmembrane region" description="Helical; Name=7" evidence="2">
    <location>
        <begin position="353"/>
        <end position="373"/>
    </location>
</feature>
<feature type="topological domain" description="Extracellular" evidence="1">
    <location>
        <begin position="374"/>
        <end position="389"/>
    </location>
</feature>
<feature type="glycosylation site" description="N-linked (GlcNAc...) asparagine" evidence="2">
    <location>
        <position position="80"/>
    </location>
</feature>
<feature type="glycosylation site" description="N-linked (GlcNAc...) asparagine" evidence="2">
    <location>
        <position position="258"/>
    </location>
</feature>
<organism>
    <name type="scientific">Drosophila melanogaster</name>
    <name type="common">Fruit fly</name>
    <dbReference type="NCBI Taxonomy" id="7227"/>
    <lineage>
        <taxon>Eukaryota</taxon>
        <taxon>Metazoa</taxon>
        <taxon>Ecdysozoa</taxon>
        <taxon>Arthropoda</taxon>
        <taxon>Hexapoda</taxon>
        <taxon>Insecta</taxon>
        <taxon>Pterygota</taxon>
        <taxon>Neoptera</taxon>
        <taxon>Endopterygota</taxon>
        <taxon>Diptera</taxon>
        <taxon>Brachycera</taxon>
        <taxon>Muscomorpha</taxon>
        <taxon>Ephydroidea</taxon>
        <taxon>Drosophilidae</taxon>
        <taxon>Drosophila</taxon>
        <taxon>Sophophora</taxon>
    </lineage>
</organism>
<keyword id="KW-0085">Behavior</keyword>
<keyword id="KW-1003">Cell membrane</keyword>
<keyword id="KW-0325">Glycoprotein</keyword>
<keyword id="KW-0472">Membrane</keyword>
<keyword id="KW-0675">Receptor</keyword>
<keyword id="KW-1185">Reference proteome</keyword>
<keyword id="KW-0807">Transducer</keyword>
<keyword id="KW-0812">Transmembrane</keyword>
<keyword id="KW-1133">Transmembrane helix</keyword>
<comment type="function">
    <text evidence="3 5">Dsx-dependent essential component of pheromone-driven courtship behavior (PubMed:12971900). Recognizes a female pheromone involved in the second step (tapping step) of the courtship display which is essential for efficient execution of the entire courtship sequence and timely mating (PubMed:12971900). Required for detection of the male sex pheromone CH503 which is transferred from males to females during mating and inhibits courtship behavior by other males (PubMed:26083710). Gr68a-expressing neurons in the male foreleg relay signals to the suboesophageal zone (SEZ) and courtship suppression is mediated by the release of the neuropeptide tachykinin from a cluster of 8-10 neurons in the SEZ (PubMed:26083710).</text>
</comment>
<comment type="subcellular location">
    <subcellularLocation>
        <location evidence="6">Cell membrane</location>
        <topology evidence="6">Multi-pass membrane protein</topology>
    </subcellularLocation>
</comment>
<comment type="tissue specificity">
    <text evidence="3 4">Expressed in chemosensory neurons of about 20 male-specific gustatory bristles in the forelegs (PubMed:12971900). No expression is seen in the mechanosensory neurons (PubMed:12971900). In larvae, expressed in the ventral pharyngeal sense organ (PubMed:22031876).</text>
</comment>
<comment type="disruption phenotype">
    <text evidence="5">Mutant males display robust courtship behavior in the presence of CH503-perfumed females.</text>
</comment>
<comment type="similarity">
    <text evidence="6">Belongs to the insect chemoreceptor superfamily. Gustatory receptor (GR) family. Gr21a subfamily.</text>
</comment>
<gene>
    <name type="primary">Gr68a</name>
    <name type="synonym">GR68D.1</name>
    <name type="ORF">CG7303</name>
</gene>
<protein>
    <recommendedName>
        <fullName>Gustatory receptor 68a</fullName>
    </recommendedName>
</protein>
<proteinExistence type="evidence at transcript level"/>
<sequence>MKIYQDIYPISKPSQIFAILPFYSGDVDDGFRFGGLGRWYGRLVALIILIGSLTLGEDVLFASKEYRLVASAQGDTEEINRTIETLLCIISYTMVVLSSVQNASRHFRTLHDIAKIDEYLLANGFRETYSCRNLTILVTSAAGGVLAVAFYYIHYRSGIGAKRQIILLLIYFLQLLYSTLLALYLRTLMMNLAQRIGFLNQKLDTFNLQDCGHMENWRELSNLIEVLCKFRYITENINCVAGVSLLFYFGFSFYTVTNQSYLAFATLTAGSLSSKTEVADTIGLSCIWVLAETITMIVICSACDGLASEVNGTAQILARIYGKSKQFQNLIDKFLTKSIKQDLQFTAYGFFSIDNSTLFKIFSAVTTYLVILIQFKQLEDSKVEDISQA</sequence>
<accession>Q9VTN0</accession>
<evidence type="ECO:0000250" key="1"/>
<evidence type="ECO:0000255" key="2"/>
<evidence type="ECO:0000269" key="3">
    <source>
    </source>
</evidence>
<evidence type="ECO:0000269" key="4">
    <source>
    </source>
</evidence>
<evidence type="ECO:0000269" key="5">
    <source>
    </source>
</evidence>
<evidence type="ECO:0000305" key="6"/>